<feature type="chain" id="PRO_1000214760" description="Small ribosomal subunit protein uS15">
    <location>
        <begin position="1"/>
        <end position="89"/>
    </location>
</feature>
<protein>
    <recommendedName>
        <fullName evidence="1">Small ribosomal subunit protein uS15</fullName>
    </recommendedName>
    <alternativeName>
        <fullName evidence="2">30S ribosomal protein S15</fullName>
    </alternativeName>
</protein>
<organism>
    <name type="scientific">Geobacillus sp. (strain WCH70)</name>
    <dbReference type="NCBI Taxonomy" id="471223"/>
    <lineage>
        <taxon>Bacteria</taxon>
        <taxon>Bacillati</taxon>
        <taxon>Bacillota</taxon>
        <taxon>Bacilli</taxon>
        <taxon>Bacillales</taxon>
        <taxon>Anoxybacillaceae</taxon>
        <taxon>Geobacillus</taxon>
    </lineage>
</organism>
<accession>C5D9D4</accession>
<dbReference type="EMBL" id="CP001638">
    <property type="protein sequence ID" value="ACS24020.1"/>
    <property type="molecule type" value="Genomic_DNA"/>
</dbReference>
<dbReference type="SMR" id="C5D9D4"/>
<dbReference type="STRING" id="471223.GWCH70_1160"/>
<dbReference type="KEGG" id="gwc:GWCH70_1160"/>
<dbReference type="eggNOG" id="COG0184">
    <property type="taxonomic scope" value="Bacteria"/>
</dbReference>
<dbReference type="HOGENOM" id="CLU_148518_0_0_9"/>
<dbReference type="OrthoDB" id="9799262at2"/>
<dbReference type="GO" id="GO:0022627">
    <property type="term" value="C:cytosolic small ribosomal subunit"/>
    <property type="evidence" value="ECO:0007669"/>
    <property type="project" value="TreeGrafter"/>
</dbReference>
<dbReference type="GO" id="GO:0019843">
    <property type="term" value="F:rRNA binding"/>
    <property type="evidence" value="ECO:0007669"/>
    <property type="project" value="UniProtKB-UniRule"/>
</dbReference>
<dbReference type="GO" id="GO:0003735">
    <property type="term" value="F:structural constituent of ribosome"/>
    <property type="evidence" value="ECO:0007669"/>
    <property type="project" value="InterPro"/>
</dbReference>
<dbReference type="GO" id="GO:0006412">
    <property type="term" value="P:translation"/>
    <property type="evidence" value="ECO:0007669"/>
    <property type="project" value="UniProtKB-UniRule"/>
</dbReference>
<dbReference type="CDD" id="cd00353">
    <property type="entry name" value="Ribosomal_S15p_S13e"/>
    <property type="match status" value="1"/>
</dbReference>
<dbReference type="FunFam" id="1.10.287.10:FF:000002">
    <property type="entry name" value="30S ribosomal protein S15"/>
    <property type="match status" value="1"/>
</dbReference>
<dbReference type="Gene3D" id="6.10.250.3130">
    <property type="match status" value="1"/>
</dbReference>
<dbReference type="Gene3D" id="1.10.287.10">
    <property type="entry name" value="S15/NS1, RNA-binding"/>
    <property type="match status" value="1"/>
</dbReference>
<dbReference type="HAMAP" id="MF_01343_B">
    <property type="entry name" value="Ribosomal_uS15_B"/>
    <property type="match status" value="1"/>
</dbReference>
<dbReference type="InterPro" id="IPR000589">
    <property type="entry name" value="Ribosomal_uS15"/>
</dbReference>
<dbReference type="InterPro" id="IPR005290">
    <property type="entry name" value="Ribosomal_uS15_bac-type"/>
</dbReference>
<dbReference type="InterPro" id="IPR009068">
    <property type="entry name" value="uS15_NS1_RNA-bd_sf"/>
</dbReference>
<dbReference type="NCBIfam" id="TIGR00952">
    <property type="entry name" value="S15_bact"/>
    <property type="match status" value="1"/>
</dbReference>
<dbReference type="PANTHER" id="PTHR23321">
    <property type="entry name" value="RIBOSOMAL PROTEIN S15, BACTERIAL AND ORGANELLAR"/>
    <property type="match status" value="1"/>
</dbReference>
<dbReference type="PANTHER" id="PTHR23321:SF26">
    <property type="entry name" value="SMALL RIBOSOMAL SUBUNIT PROTEIN US15M"/>
    <property type="match status" value="1"/>
</dbReference>
<dbReference type="Pfam" id="PF00312">
    <property type="entry name" value="Ribosomal_S15"/>
    <property type="match status" value="1"/>
</dbReference>
<dbReference type="SMART" id="SM01387">
    <property type="entry name" value="Ribosomal_S15"/>
    <property type="match status" value="1"/>
</dbReference>
<dbReference type="SUPFAM" id="SSF47060">
    <property type="entry name" value="S15/NS1 RNA-binding domain"/>
    <property type="match status" value="1"/>
</dbReference>
<dbReference type="PROSITE" id="PS00362">
    <property type="entry name" value="RIBOSOMAL_S15"/>
    <property type="match status" value="1"/>
</dbReference>
<comment type="function">
    <text evidence="1">One of the primary rRNA binding proteins, it binds directly to 16S rRNA where it helps nucleate assembly of the platform of the 30S subunit by binding and bridging several RNA helices of the 16S rRNA.</text>
</comment>
<comment type="function">
    <text evidence="1">Forms an intersubunit bridge (bridge B4) with the 23S rRNA of the 50S subunit in the ribosome.</text>
</comment>
<comment type="subunit">
    <text evidence="1">Part of the 30S ribosomal subunit. Forms a bridge to the 50S subunit in the 70S ribosome, contacting the 23S rRNA.</text>
</comment>
<comment type="similarity">
    <text evidence="1">Belongs to the universal ribosomal protein uS15 family.</text>
</comment>
<name>RS15_GEOSW</name>
<reference key="1">
    <citation type="submission" date="2009-06" db="EMBL/GenBank/DDBJ databases">
        <title>Complete sequence of chromosome of Geopacillus sp. WCH70.</title>
        <authorList>
            <consortium name="US DOE Joint Genome Institute"/>
            <person name="Lucas S."/>
            <person name="Copeland A."/>
            <person name="Lapidus A."/>
            <person name="Glavina del Rio T."/>
            <person name="Dalin E."/>
            <person name="Tice H."/>
            <person name="Bruce D."/>
            <person name="Goodwin L."/>
            <person name="Pitluck S."/>
            <person name="Chertkov O."/>
            <person name="Brettin T."/>
            <person name="Detter J.C."/>
            <person name="Han C."/>
            <person name="Larimer F."/>
            <person name="Land M."/>
            <person name="Hauser L."/>
            <person name="Kyrpides N."/>
            <person name="Mikhailova N."/>
            <person name="Brumm P."/>
            <person name="Mead D.A."/>
            <person name="Richardson P."/>
        </authorList>
    </citation>
    <scope>NUCLEOTIDE SEQUENCE [LARGE SCALE GENOMIC DNA]</scope>
    <source>
        <strain>WCH70</strain>
    </source>
</reference>
<sequence>MALSQERKREIIEQFKIHENDTGSPEVQIAILTEQINNLNEHLRVHKKDHHSRRGLLKMVGKRRNLLTYLRNKDIARYRELINKLGLRR</sequence>
<evidence type="ECO:0000255" key="1">
    <source>
        <dbReference type="HAMAP-Rule" id="MF_01343"/>
    </source>
</evidence>
<evidence type="ECO:0000305" key="2"/>
<keyword id="KW-0687">Ribonucleoprotein</keyword>
<keyword id="KW-0689">Ribosomal protein</keyword>
<keyword id="KW-0694">RNA-binding</keyword>
<keyword id="KW-0699">rRNA-binding</keyword>
<gene>
    <name evidence="1" type="primary">rpsO</name>
    <name type="ordered locus">GWCH70_1160</name>
</gene>
<proteinExistence type="inferred from homology"/>